<name>TILS_COXBU</name>
<gene>
    <name evidence="1" type="primary">tilS</name>
    <name type="ordered locus">CBU_1509</name>
</gene>
<feature type="chain" id="PRO_0000181685" description="tRNA(Ile)-lysidine synthase">
    <location>
        <begin position="1"/>
        <end position="449"/>
    </location>
</feature>
<feature type="binding site" evidence="1">
    <location>
        <begin position="35"/>
        <end position="40"/>
    </location>
    <ligand>
        <name>ATP</name>
        <dbReference type="ChEBI" id="CHEBI:30616"/>
    </ligand>
</feature>
<sequence length="449" mass="51340">MVELWQGLGCVFTPEKLLKFITTLTSNSNFCIAYSGGIDSHVLVHAMSHLCQEHPWQLRALHINHGLNPKANDWENHCQQICNRLKIPFQSERVTLSLQPGDSIEAVARKARYAIFQQALSENETLLTAHTENDQAETFLLQLLRGAGVKGLSAMPAKRKLGKGELVRPLLAITRDDLKKYAEKNNLRWVEDDTNLELRFNRNYLRHEVLPILRRRWPEVFAVISRSANHCAEAALLLDQLAESDLQLIQKDSELEILPLLQLTPERQRNVLRRWIYLHGFQLPQTKQLEQIRNDVLLAAHDANPVFSYHTIEIRRHHGKLYLSNALSAHNATPLISWNFSRSLPLPGDLGTLIAEKKKGVGIKTTLDTSKITVRFRQGGEQCQPAGRKETHTLKKLMQEWKIPVWQRDRVPLIYLGDKLIAVVGYCICEGFEAKGEEWGWNVEVQPPK</sequence>
<dbReference type="EC" id="6.3.4.19" evidence="1"/>
<dbReference type="EMBL" id="AE016828">
    <property type="protein sequence ID" value="AAO91006.1"/>
    <property type="molecule type" value="Genomic_DNA"/>
</dbReference>
<dbReference type="RefSeq" id="NP_820492.1">
    <property type="nucleotide sequence ID" value="NC_002971.4"/>
</dbReference>
<dbReference type="RefSeq" id="WP_005772040.1">
    <property type="nucleotide sequence ID" value="NC_002971.4"/>
</dbReference>
<dbReference type="SMR" id="Q83BJ9"/>
<dbReference type="STRING" id="227377.CBU_1509"/>
<dbReference type="EnsemblBacteria" id="AAO91006">
    <property type="protein sequence ID" value="AAO91006"/>
    <property type="gene ID" value="CBU_1509"/>
</dbReference>
<dbReference type="GeneID" id="1209419"/>
<dbReference type="KEGG" id="cbu:CBU_1509"/>
<dbReference type="PATRIC" id="fig|227377.7.peg.1511"/>
<dbReference type="eggNOG" id="COG0037">
    <property type="taxonomic scope" value="Bacteria"/>
</dbReference>
<dbReference type="HOGENOM" id="CLU_018869_2_0_6"/>
<dbReference type="OrthoDB" id="9807403at2"/>
<dbReference type="Proteomes" id="UP000002671">
    <property type="component" value="Chromosome"/>
</dbReference>
<dbReference type="GO" id="GO:0005737">
    <property type="term" value="C:cytoplasm"/>
    <property type="evidence" value="ECO:0007669"/>
    <property type="project" value="UniProtKB-SubCell"/>
</dbReference>
<dbReference type="GO" id="GO:0005524">
    <property type="term" value="F:ATP binding"/>
    <property type="evidence" value="ECO:0007669"/>
    <property type="project" value="UniProtKB-UniRule"/>
</dbReference>
<dbReference type="GO" id="GO:0032267">
    <property type="term" value="F:tRNA(Ile)-lysidine synthase activity"/>
    <property type="evidence" value="ECO:0007669"/>
    <property type="project" value="UniProtKB-EC"/>
</dbReference>
<dbReference type="GO" id="GO:0006400">
    <property type="term" value="P:tRNA modification"/>
    <property type="evidence" value="ECO:0007669"/>
    <property type="project" value="UniProtKB-UniRule"/>
</dbReference>
<dbReference type="CDD" id="cd01992">
    <property type="entry name" value="TilS_N"/>
    <property type="match status" value="1"/>
</dbReference>
<dbReference type="Gene3D" id="1.20.59.20">
    <property type="match status" value="1"/>
</dbReference>
<dbReference type="Gene3D" id="3.40.50.620">
    <property type="entry name" value="HUPs"/>
    <property type="match status" value="1"/>
</dbReference>
<dbReference type="HAMAP" id="MF_01161">
    <property type="entry name" value="tRNA_Ile_lys_synt"/>
    <property type="match status" value="1"/>
</dbReference>
<dbReference type="InterPro" id="IPR012796">
    <property type="entry name" value="Lysidine-tRNA-synth_C"/>
</dbReference>
<dbReference type="InterPro" id="IPR014729">
    <property type="entry name" value="Rossmann-like_a/b/a_fold"/>
</dbReference>
<dbReference type="InterPro" id="IPR011063">
    <property type="entry name" value="TilS/TtcA_N"/>
</dbReference>
<dbReference type="InterPro" id="IPR012094">
    <property type="entry name" value="tRNA_Ile_lys_synt"/>
</dbReference>
<dbReference type="InterPro" id="IPR012795">
    <property type="entry name" value="tRNA_Ile_lys_synt_N"/>
</dbReference>
<dbReference type="InterPro" id="IPR015262">
    <property type="entry name" value="tRNA_Ile_lys_synt_subst-bd"/>
</dbReference>
<dbReference type="NCBIfam" id="TIGR02433">
    <property type="entry name" value="lysidine_TilS_C"/>
    <property type="match status" value="1"/>
</dbReference>
<dbReference type="NCBIfam" id="TIGR02432">
    <property type="entry name" value="lysidine_TilS_N"/>
    <property type="match status" value="1"/>
</dbReference>
<dbReference type="PANTHER" id="PTHR43033">
    <property type="entry name" value="TRNA(ILE)-LYSIDINE SYNTHASE-RELATED"/>
    <property type="match status" value="1"/>
</dbReference>
<dbReference type="PANTHER" id="PTHR43033:SF1">
    <property type="entry name" value="TRNA(ILE)-LYSIDINE SYNTHASE-RELATED"/>
    <property type="match status" value="1"/>
</dbReference>
<dbReference type="Pfam" id="PF01171">
    <property type="entry name" value="ATP_bind_3"/>
    <property type="match status" value="1"/>
</dbReference>
<dbReference type="Pfam" id="PF09179">
    <property type="entry name" value="TilS"/>
    <property type="match status" value="1"/>
</dbReference>
<dbReference type="Pfam" id="PF11734">
    <property type="entry name" value="TilS_C"/>
    <property type="match status" value="1"/>
</dbReference>
<dbReference type="SMART" id="SM00977">
    <property type="entry name" value="TilS_C"/>
    <property type="match status" value="1"/>
</dbReference>
<dbReference type="SUPFAM" id="SSF52402">
    <property type="entry name" value="Adenine nucleotide alpha hydrolases-like"/>
    <property type="match status" value="1"/>
</dbReference>
<dbReference type="SUPFAM" id="SSF82829">
    <property type="entry name" value="MesJ substrate recognition domain-like"/>
    <property type="match status" value="1"/>
</dbReference>
<dbReference type="SUPFAM" id="SSF56037">
    <property type="entry name" value="PheT/TilS domain"/>
    <property type="match status" value="1"/>
</dbReference>
<evidence type="ECO:0000255" key="1">
    <source>
        <dbReference type="HAMAP-Rule" id="MF_01161"/>
    </source>
</evidence>
<proteinExistence type="inferred from homology"/>
<accession>Q83BJ9</accession>
<reference key="1">
    <citation type="journal article" date="2003" name="Proc. Natl. Acad. Sci. U.S.A.">
        <title>Complete genome sequence of the Q-fever pathogen, Coxiella burnetii.</title>
        <authorList>
            <person name="Seshadri R."/>
            <person name="Paulsen I.T."/>
            <person name="Eisen J.A."/>
            <person name="Read T.D."/>
            <person name="Nelson K.E."/>
            <person name="Nelson W.C."/>
            <person name="Ward N.L."/>
            <person name="Tettelin H."/>
            <person name="Davidsen T.M."/>
            <person name="Beanan M.J."/>
            <person name="DeBoy R.T."/>
            <person name="Daugherty S.C."/>
            <person name="Brinkac L.M."/>
            <person name="Madupu R."/>
            <person name="Dodson R.J."/>
            <person name="Khouri H.M."/>
            <person name="Lee K.H."/>
            <person name="Carty H.A."/>
            <person name="Scanlan D."/>
            <person name="Heinzen R.A."/>
            <person name="Thompson H.A."/>
            <person name="Samuel J.E."/>
            <person name="Fraser C.M."/>
            <person name="Heidelberg J.F."/>
        </authorList>
    </citation>
    <scope>NUCLEOTIDE SEQUENCE [LARGE SCALE GENOMIC DNA]</scope>
    <source>
        <strain>RSA 493 / Nine Mile phase I</strain>
    </source>
</reference>
<protein>
    <recommendedName>
        <fullName evidence="1">tRNA(Ile)-lysidine synthase</fullName>
        <ecNumber evidence="1">6.3.4.19</ecNumber>
    </recommendedName>
    <alternativeName>
        <fullName evidence="1">tRNA(Ile)-2-lysyl-cytidine synthase</fullName>
    </alternativeName>
    <alternativeName>
        <fullName evidence="1">tRNA(Ile)-lysidine synthetase</fullName>
    </alternativeName>
</protein>
<comment type="function">
    <text evidence="1">Ligates lysine onto the cytidine present at position 34 of the AUA codon-specific tRNA(Ile) that contains the anticodon CAU, in an ATP-dependent manner. Cytidine is converted to lysidine, thus changing the amino acid specificity of the tRNA from methionine to isoleucine.</text>
</comment>
<comment type="catalytic activity">
    <reaction evidence="1">
        <text>cytidine(34) in tRNA(Ile2) + L-lysine + ATP = lysidine(34) in tRNA(Ile2) + AMP + diphosphate + H(+)</text>
        <dbReference type="Rhea" id="RHEA:43744"/>
        <dbReference type="Rhea" id="RHEA-COMP:10625"/>
        <dbReference type="Rhea" id="RHEA-COMP:10670"/>
        <dbReference type="ChEBI" id="CHEBI:15378"/>
        <dbReference type="ChEBI" id="CHEBI:30616"/>
        <dbReference type="ChEBI" id="CHEBI:32551"/>
        <dbReference type="ChEBI" id="CHEBI:33019"/>
        <dbReference type="ChEBI" id="CHEBI:82748"/>
        <dbReference type="ChEBI" id="CHEBI:83665"/>
        <dbReference type="ChEBI" id="CHEBI:456215"/>
        <dbReference type="EC" id="6.3.4.19"/>
    </reaction>
</comment>
<comment type="subcellular location">
    <subcellularLocation>
        <location evidence="1">Cytoplasm</location>
    </subcellularLocation>
</comment>
<comment type="domain">
    <text>The N-terminal region contains the highly conserved SGGXDS motif, predicted to be a P-loop motif involved in ATP binding.</text>
</comment>
<comment type="similarity">
    <text evidence="1">Belongs to the tRNA(Ile)-lysidine synthase family.</text>
</comment>
<keyword id="KW-0067">ATP-binding</keyword>
<keyword id="KW-0963">Cytoplasm</keyword>
<keyword id="KW-0436">Ligase</keyword>
<keyword id="KW-0547">Nucleotide-binding</keyword>
<keyword id="KW-1185">Reference proteome</keyword>
<keyword id="KW-0819">tRNA processing</keyword>
<organism>
    <name type="scientific">Coxiella burnetii (strain RSA 493 / Nine Mile phase I)</name>
    <dbReference type="NCBI Taxonomy" id="227377"/>
    <lineage>
        <taxon>Bacteria</taxon>
        <taxon>Pseudomonadati</taxon>
        <taxon>Pseudomonadota</taxon>
        <taxon>Gammaproteobacteria</taxon>
        <taxon>Legionellales</taxon>
        <taxon>Coxiellaceae</taxon>
        <taxon>Coxiella</taxon>
    </lineage>
</organism>